<feature type="chain" id="PRO_1000148599" description="ATP synthase gamma chain">
    <location>
        <begin position="1"/>
        <end position="286"/>
    </location>
</feature>
<gene>
    <name evidence="1" type="primary">atpG</name>
    <name type="ordered locus">BAMEG_5595</name>
</gene>
<evidence type="ECO:0000255" key="1">
    <source>
        <dbReference type="HAMAP-Rule" id="MF_00815"/>
    </source>
</evidence>
<accession>C3LFI0</accession>
<proteinExistence type="inferred from homology"/>
<dbReference type="EMBL" id="CP001215">
    <property type="protein sequence ID" value="ACP12816.1"/>
    <property type="molecule type" value="Genomic_DNA"/>
</dbReference>
<dbReference type="RefSeq" id="WP_000157696.1">
    <property type="nucleotide sequence ID" value="NC_012581.1"/>
</dbReference>
<dbReference type="SMR" id="C3LFI0"/>
<dbReference type="GeneID" id="93005817"/>
<dbReference type="KEGG" id="bah:BAMEG_5595"/>
<dbReference type="HOGENOM" id="CLU_050669_0_1_9"/>
<dbReference type="GO" id="GO:0005886">
    <property type="term" value="C:plasma membrane"/>
    <property type="evidence" value="ECO:0007669"/>
    <property type="project" value="UniProtKB-SubCell"/>
</dbReference>
<dbReference type="GO" id="GO:0045259">
    <property type="term" value="C:proton-transporting ATP synthase complex"/>
    <property type="evidence" value="ECO:0007669"/>
    <property type="project" value="UniProtKB-KW"/>
</dbReference>
<dbReference type="GO" id="GO:0005524">
    <property type="term" value="F:ATP binding"/>
    <property type="evidence" value="ECO:0007669"/>
    <property type="project" value="UniProtKB-UniRule"/>
</dbReference>
<dbReference type="GO" id="GO:0046933">
    <property type="term" value="F:proton-transporting ATP synthase activity, rotational mechanism"/>
    <property type="evidence" value="ECO:0007669"/>
    <property type="project" value="UniProtKB-UniRule"/>
</dbReference>
<dbReference type="GO" id="GO:0042777">
    <property type="term" value="P:proton motive force-driven plasma membrane ATP synthesis"/>
    <property type="evidence" value="ECO:0007669"/>
    <property type="project" value="UniProtKB-UniRule"/>
</dbReference>
<dbReference type="CDD" id="cd12151">
    <property type="entry name" value="F1-ATPase_gamma"/>
    <property type="match status" value="1"/>
</dbReference>
<dbReference type="FunFam" id="3.40.1380.10:FF:000002">
    <property type="entry name" value="ATP synthase gamma chain"/>
    <property type="match status" value="1"/>
</dbReference>
<dbReference type="Gene3D" id="3.40.1380.10">
    <property type="match status" value="1"/>
</dbReference>
<dbReference type="Gene3D" id="1.10.287.80">
    <property type="entry name" value="ATP synthase, gamma subunit, helix hairpin domain"/>
    <property type="match status" value="1"/>
</dbReference>
<dbReference type="HAMAP" id="MF_00815">
    <property type="entry name" value="ATP_synth_gamma_bact"/>
    <property type="match status" value="1"/>
</dbReference>
<dbReference type="InterPro" id="IPR035968">
    <property type="entry name" value="ATP_synth_F1_ATPase_gsu"/>
</dbReference>
<dbReference type="InterPro" id="IPR000131">
    <property type="entry name" value="ATP_synth_F1_gsu"/>
</dbReference>
<dbReference type="InterPro" id="IPR023632">
    <property type="entry name" value="ATP_synth_F1_gsu_CS"/>
</dbReference>
<dbReference type="NCBIfam" id="TIGR01146">
    <property type="entry name" value="ATPsyn_F1gamma"/>
    <property type="match status" value="1"/>
</dbReference>
<dbReference type="PANTHER" id="PTHR11693">
    <property type="entry name" value="ATP SYNTHASE GAMMA CHAIN"/>
    <property type="match status" value="1"/>
</dbReference>
<dbReference type="PANTHER" id="PTHR11693:SF22">
    <property type="entry name" value="ATP SYNTHASE SUBUNIT GAMMA, MITOCHONDRIAL"/>
    <property type="match status" value="1"/>
</dbReference>
<dbReference type="Pfam" id="PF00231">
    <property type="entry name" value="ATP-synt"/>
    <property type="match status" value="1"/>
</dbReference>
<dbReference type="PRINTS" id="PR00126">
    <property type="entry name" value="ATPASEGAMMA"/>
</dbReference>
<dbReference type="SUPFAM" id="SSF52943">
    <property type="entry name" value="ATP synthase (F1-ATPase), gamma subunit"/>
    <property type="match status" value="1"/>
</dbReference>
<dbReference type="PROSITE" id="PS00153">
    <property type="entry name" value="ATPASE_GAMMA"/>
    <property type="match status" value="1"/>
</dbReference>
<comment type="function">
    <text evidence="1">Produces ATP from ADP in the presence of a proton gradient across the membrane. The gamma chain is believed to be important in regulating ATPase activity and the flow of protons through the CF(0) complex.</text>
</comment>
<comment type="subunit">
    <text evidence="1">F-type ATPases have 2 components, CF(1) - the catalytic core - and CF(0) - the membrane proton channel. CF(1) has five subunits: alpha(3), beta(3), gamma(1), delta(1), epsilon(1). CF(0) has three main subunits: a, b and c.</text>
</comment>
<comment type="subcellular location">
    <subcellularLocation>
        <location evidence="1">Cell membrane</location>
        <topology evidence="1">Peripheral membrane protein</topology>
    </subcellularLocation>
</comment>
<comment type="similarity">
    <text evidence="1">Belongs to the ATPase gamma chain family.</text>
</comment>
<name>ATPG_BACAC</name>
<reference key="1">
    <citation type="submission" date="2008-10" db="EMBL/GenBank/DDBJ databases">
        <title>Genome sequence of Bacillus anthracis str. CDC 684.</title>
        <authorList>
            <person name="Dodson R.J."/>
            <person name="Munk A.C."/>
            <person name="Brettin T."/>
            <person name="Bruce D."/>
            <person name="Detter C."/>
            <person name="Tapia R."/>
            <person name="Han C."/>
            <person name="Sutton G."/>
            <person name="Sims D."/>
        </authorList>
    </citation>
    <scope>NUCLEOTIDE SEQUENCE [LARGE SCALE GENOMIC DNA]</scope>
    <source>
        <strain>CDC 684 / NRRL 3495</strain>
    </source>
</reference>
<keyword id="KW-0066">ATP synthesis</keyword>
<keyword id="KW-1003">Cell membrane</keyword>
<keyword id="KW-0139">CF(1)</keyword>
<keyword id="KW-0375">Hydrogen ion transport</keyword>
<keyword id="KW-0406">Ion transport</keyword>
<keyword id="KW-0472">Membrane</keyword>
<keyword id="KW-0813">Transport</keyword>
<organism>
    <name type="scientific">Bacillus anthracis (strain CDC 684 / NRRL 3495)</name>
    <dbReference type="NCBI Taxonomy" id="568206"/>
    <lineage>
        <taxon>Bacteria</taxon>
        <taxon>Bacillati</taxon>
        <taxon>Bacillota</taxon>
        <taxon>Bacilli</taxon>
        <taxon>Bacillales</taxon>
        <taxon>Bacillaceae</taxon>
        <taxon>Bacillus</taxon>
        <taxon>Bacillus cereus group</taxon>
    </lineage>
</organism>
<protein>
    <recommendedName>
        <fullName evidence="1">ATP synthase gamma chain</fullName>
    </recommendedName>
    <alternativeName>
        <fullName evidence="1">ATP synthase F1 sector gamma subunit</fullName>
    </alternativeName>
    <alternativeName>
        <fullName evidence="1">F-ATPase gamma subunit</fullName>
    </alternativeName>
</protein>
<sequence length="286" mass="31606">MASLRDIKAKINSTKKTSQITKAMEMVSASKLNRAEQNAKSFVPYMEKIQEVVASIAQGSKGINHPMLNARPVKRTGYIVITSDRGLAGGYNSNVLRTVSNVIRERHNMDSNQYSIIVLGRLGRDYLKRRGFNIIDEVVGLSDHPSFTDIKDLASRAIAMFADGAYDELYIYYNHYVSKISQEVTENKILPLTDVASDKPTTAYEFEPSEEEILKVLLPQYAESLVYGALLDGKASEHAARMTAMKSATDNAMEVIDSLTLSFNRARQAAITQEITEIVGGAAALE</sequence>